<feature type="initiator methionine" description="Removed" evidence="1">
    <location>
        <position position="1"/>
    </location>
</feature>
<feature type="chain" id="PRO_0000359662" description="Photosystem II D2 protein">
    <location>
        <begin position="2"/>
        <end position="353"/>
    </location>
</feature>
<feature type="transmembrane region" description="Helical" evidence="2">
    <location>
        <begin position="41"/>
        <end position="61"/>
    </location>
</feature>
<feature type="transmembrane region" description="Helical" evidence="2">
    <location>
        <begin position="125"/>
        <end position="141"/>
    </location>
</feature>
<feature type="transmembrane region" description="Helical" evidence="2">
    <location>
        <begin position="153"/>
        <end position="166"/>
    </location>
</feature>
<feature type="transmembrane region" description="Helical" evidence="2">
    <location>
        <begin position="208"/>
        <end position="228"/>
    </location>
</feature>
<feature type="transmembrane region" description="Helical" evidence="2">
    <location>
        <begin position="279"/>
        <end position="295"/>
    </location>
</feature>
<feature type="binding site" description="axial binding residue" evidence="2">
    <location>
        <position position="118"/>
    </location>
    <ligand>
        <name>chlorophyll a</name>
        <dbReference type="ChEBI" id="CHEBI:58416"/>
        <label>ChlzD2</label>
    </ligand>
    <ligandPart>
        <name>Mg</name>
        <dbReference type="ChEBI" id="CHEBI:25107"/>
    </ligandPart>
</feature>
<feature type="binding site" evidence="2">
    <location>
        <position position="130"/>
    </location>
    <ligand>
        <name>pheophytin a</name>
        <dbReference type="ChEBI" id="CHEBI:136840"/>
        <label>D2</label>
    </ligand>
</feature>
<feature type="binding site" evidence="2">
    <location>
        <position position="143"/>
    </location>
    <ligand>
        <name>pheophytin a</name>
        <dbReference type="ChEBI" id="CHEBI:136840"/>
        <label>D2</label>
    </ligand>
</feature>
<feature type="binding site" description="axial binding residue" evidence="2">
    <location>
        <position position="198"/>
    </location>
    <ligand>
        <name>chlorophyll a</name>
        <dbReference type="ChEBI" id="CHEBI:58416"/>
        <label>PD2</label>
    </ligand>
    <ligandPart>
        <name>Mg</name>
        <dbReference type="ChEBI" id="CHEBI:25107"/>
    </ligandPart>
</feature>
<feature type="binding site" evidence="2">
    <location>
        <position position="215"/>
    </location>
    <ligand>
        <name>a plastoquinone</name>
        <dbReference type="ChEBI" id="CHEBI:17757"/>
        <label>Q(A)</label>
    </ligand>
</feature>
<feature type="binding site" evidence="2">
    <location>
        <position position="215"/>
    </location>
    <ligand>
        <name>Fe cation</name>
        <dbReference type="ChEBI" id="CHEBI:24875"/>
        <note>ligand shared with heterodimeric partner</note>
    </ligand>
</feature>
<feature type="binding site" evidence="2">
    <location>
        <position position="262"/>
    </location>
    <ligand>
        <name>a plastoquinone</name>
        <dbReference type="ChEBI" id="CHEBI:17757"/>
        <label>Q(A)</label>
    </ligand>
</feature>
<feature type="binding site" evidence="2">
    <location>
        <position position="269"/>
    </location>
    <ligand>
        <name>Fe cation</name>
        <dbReference type="ChEBI" id="CHEBI:24875"/>
        <note>ligand shared with heterodimeric partner</note>
    </ligand>
</feature>
<feature type="modified residue" description="N-acetylthreonine" evidence="1">
    <location>
        <position position="2"/>
    </location>
</feature>
<feature type="modified residue" description="Phosphothreonine" evidence="1">
    <location>
        <position position="2"/>
    </location>
</feature>
<keyword id="KW-0007">Acetylation</keyword>
<keyword id="KW-0148">Chlorophyll</keyword>
<keyword id="KW-0150">Chloroplast</keyword>
<keyword id="KW-0157">Chromophore</keyword>
<keyword id="KW-0249">Electron transport</keyword>
<keyword id="KW-0408">Iron</keyword>
<keyword id="KW-0460">Magnesium</keyword>
<keyword id="KW-0472">Membrane</keyword>
<keyword id="KW-0479">Metal-binding</keyword>
<keyword id="KW-0560">Oxidoreductase</keyword>
<keyword id="KW-0597">Phosphoprotein</keyword>
<keyword id="KW-0602">Photosynthesis</keyword>
<keyword id="KW-0604">Photosystem II</keyword>
<keyword id="KW-0934">Plastid</keyword>
<keyword id="KW-0793">Thylakoid</keyword>
<keyword id="KW-0812">Transmembrane</keyword>
<keyword id="KW-1133">Transmembrane helix</keyword>
<keyword id="KW-0813">Transport</keyword>
<gene>
    <name evidence="2" type="primary">psbD</name>
</gene>
<dbReference type="EC" id="1.10.3.9" evidence="2"/>
<dbReference type="EMBL" id="AP009374">
    <property type="protein sequence ID" value="BAF50456.1"/>
    <property type="molecule type" value="Genomic_DNA"/>
</dbReference>
<dbReference type="RefSeq" id="YP_001123632.1">
    <property type="nucleotide sequence ID" value="NC_009273.1"/>
</dbReference>
<dbReference type="SMR" id="A4QLA1"/>
<dbReference type="GeneID" id="4962009"/>
<dbReference type="GO" id="GO:0009535">
    <property type="term" value="C:chloroplast thylakoid membrane"/>
    <property type="evidence" value="ECO:0007669"/>
    <property type="project" value="UniProtKB-SubCell"/>
</dbReference>
<dbReference type="GO" id="GO:0009523">
    <property type="term" value="C:photosystem II"/>
    <property type="evidence" value="ECO:0007669"/>
    <property type="project" value="UniProtKB-KW"/>
</dbReference>
<dbReference type="GO" id="GO:0016168">
    <property type="term" value="F:chlorophyll binding"/>
    <property type="evidence" value="ECO:0007669"/>
    <property type="project" value="UniProtKB-UniRule"/>
</dbReference>
<dbReference type="GO" id="GO:0045156">
    <property type="term" value="F:electron transporter, transferring electrons within the cyclic electron transport pathway of photosynthesis activity"/>
    <property type="evidence" value="ECO:0007669"/>
    <property type="project" value="InterPro"/>
</dbReference>
<dbReference type="GO" id="GO:0005506">
    <property type="term" value="F:iron ion binding"/>
    <property type="evidence" value="ECO:0007669"/>
    <property type="project" value="UniProtKB-UniRule"/>
</dbReference>
<dbReference type="GO" id="GO:0010242">
    <property type="term" value="F:oxygen evolving activity"/>
    <property type="evidence" value="ECO:0007669"/>
    <property type="project" value="UniProtKB-EC"/>
</dbReference>
<dbReference type="GO" id="GO:0009772">
    <property type="term" value="P:photosynthetic electron transport in photosystem II"/>
    <property type="evidence" value="ECO:0007669"/>
    <property type="project" value="InterPro"/>
</dbReference>
<dbReference type="CDD" id="cd09288">
    <property type="entry name" value="Photosystem-II_D2"/>
    <property type="match status" value="1"/>
</dbReference>
<dbReference type="FunFam" id="1.20.85.10:FF:000001">
    <property type="entry name" value="photosystem II D2 protein-like"/>
    <property type="match status" value="1"/>
</dbReference>
<dbReference type="Gene3D" id="1.20.85.10">
    <property type="entry name" value="Photosystem II protein D1-like"/>
    <property type="match status" value="1"/>
</dbReference>
<dbReference type="HAMAP" id="MF_01383">
    <property type="entry name" value="PSII_PsbD_D2"/>
    <property type="match status" value="1"/>
</dbReference>
<dbReference type="InterPro" id="IPR055266">
    <property type="entry name" value="D1/D2"/>
</dbReference>
<dbReference type="InterPro" id="IPR036854">
    <property type="entry name" value="Photo_II_D1/D2_sf"/>
</dbReference>
<dbReference type="InterPro" id="IPR000484">
    <property type="entry name" value="Photo_RC_L/M"/>
</dbReference>
<dbReference type="InterPro" id="IPR055265">
    <property type="entry name" value="Photo_RC_L/M_CS"/>
</dbReference>
<dbReference type="InterPro" id="IPR005868">
    <property type="entry name" value="PSII_PsbD/D2"/>
</dbReference>
<dbReference type="NCBIfam" id="TIGR01152">
    <property type="entry name" value="psbD"/>
    <property type="match status" value="1"/>
</dbReference>
<dbReference type="PANTHER" id="PTHR33149:SF57">
    <property type="entry name" value="PHOTOSYSTEM II D2 PROTEIN"/>
    <property type="match status" value="1"/>
</dbReference>
<dbReference type="PANTHER" id="PTHR33149">
    <property type="entry name" value="PHOTOSYSTEM II PROTEIN D1"/>
    <property type="match status" value="1"/>
</dbReference>
<dbReference type="Pfam" id="PF00124">
    <property type="entry name" value="Photo_RC"/>
    <property type="match status" value="1"/>
</dbReference>
<dbReference type="PRINTS" id="PR00256">
    <property type="entry name" value="REACTNCENTRE"/>
</dbReference>
<dbReference type="SUPFAM" id="SSF81483">
    <property type="entry name" value="Bacterial photosystem II reaction centre, L and M subunits"/>
    <property type="match status" value="1"/>
</dbReference>
<dbReference type="PROSITE" id="PS00244">
    <property type="entry name" value="REACTION_CENTER"/>
    <property type="match status" value="1"/>
</dbReference>
<protein>
    <recommendedName>
        <fullName evidence="2">Photosystem II D2 protein</fullName>
        <shortName evidence="2">PSII D2 protein</shortName>
        <ecNumber evidence="2">1.10.3.9</ecNumber>
    </recommendedName>
    <alternativeName>
        <fullName evidence="2">Photosystem Q(A) protein</fullName>
    </alternativeName>
</protein>
<reference key="1">
    <citation type="submission" date="2007-03" db="EMBL/GenBank/DDBJ databases">
        <title>Sequencing analysis of Lepidium virginicum JO26 chloroplast DNA.</title>
        <authorList>
            <person name="Hosouchi T."/>
            <person name="Tsuruoka H."/>
            <person name="Kotani H."/>
        </authorList>
    </citation>
    <scope>NUCLEOTIDE SEQUENCE [LARGE SCALE GENOMIC DNA]</scope>
</reference>
<proteinExistence type="inferred from homology"/>
<geneLocation type="chloroplast"/>
<accession>A4QLA1</accession>
<evidence type="ECO:0000250" key="1">
    <source>
        <dbReference type="UniProtKB" id="P56761"/>
    </source>
</evidence>
<evidence type="ECO:0000255" key="2">
    <source>
        <dbReference type="HAMAP-Rule" id="MF_01383"/>
    </source>
</evidence>
<comment type="function">
    <text evidence="2">Photosystem II (PSII) is a light-driven water:plastoquinone oxidoreductase that uses light energy to abstract electrons from H(2)O, generating O(2) and a proton gradient subsequently used for ATP formation. It consists of a core antenna complex that captures photons, and an electron transfer chain that converts photonic excitation into a charge separation. The D1/D2 (PsbA/PsbD) reaction center heterodimer binds P680, the primary electron donor of PSII as well as several subsequent electron acceptors. D2 is needed for assembly of a stable PSII complex.</text>
</comment>
<comment type="catalytic activity">
    <reaction evidence="2">
        <text>2 a plastoquinone + 4 hnu + 2 H2O = 2 a plastoquinol + O2</text>
        <dbReference type="Rhea" id="RHEA:36359"/>
        <dbReference type="Rhea" id="RHEA-COMP:9561"/>
        <dbReference type="Rhea" id="RHEA-COMP:9562"/>
        <dbReference type="ChEBI" id="CHEBI:15377"/>
        <dbReference type="ChEBI" id="CHEBI:15379"/>
        <dbReference type="ChEBI" id="CHEBI:17757"/>
        <dbReference type="ChEBI" id="CHEBI:30212"/>
        <dbReference type="ChEBI" id="CHEBI:62192"/>
        <dbReference type="EC" id="1.10.3.9"/>
    </reaction>
</comment>
<comment type="cofactor">
    <text evidence="2">The D1/D2 heterodimer binds P680, chlorophylls that are the primary electron donor of PSII, and subsequent electron acceptors. It shares a non-heme iron and each subunit binds pheophytin, quinone, additional chlorophylls, carotenoids and lipids. There is also a Cl(-1) ion associated with D1 and D2, which is required for oxygen evolution. The PSII complex binds additional chlorophylls, carotenoids and specific lipids.</text>
</comment>
<comment type="subunit">
    <text evidence="2">PSII is composed of 1 copy each of membrane proteins PsbA, PsbB, PsbC, PsbD, PsbE, PsbF, PsbH, PsbI, PsbJ, PsbK, PsbL, PsbM, PsbT, PsbX, PsbY, PsbZ, Psb30/Ycf12, at least 3 peripheral proteins of the oxygen-evolving complex and a large number of cofactors. It forms dimeric complexes.</text>
</comment>
<comment type="subcellular location">
    <subcellularLocation>
        <location evidence="2">Plastid</location>
        <location evidence="2">Chloroplast thylakoid membrane</location>
        <topology evidence="2">Multi-pass membrane protein</topology>
    </subcellularLocation>
</comment>
<comment type="miscellaneous">
    <text evidence="2">2 of the reaction center chlorophylls (ChlD1 and ChlD2) are entirely coordinated by water.</text>
</comment>
<comment type="similarity">
    <text evidence="2">Belongs to the reaction center PufL/M/PsbA/D family.</text>
</comment>
<organism>
    <name type="scientific">Lepidium virginicum</name>
    <name type="common">Virginia pepperweed</name>
    <dbReference type="NCBI Taxonomy" id="59292"/>
    <lineage>
        <taxon>Eukaryota</taxon>
        <taxon>Viridiplantae</taxon>
        <taxon>Streptophyta</taxon>
        <taxon>Embryophyta</taxon>
        <taxon>Tracheophyta</taxon>
        <taxon>Spermatophyta</taxon>
        <taxon>Magnoliopsida</taxon>
        <taxon>eudicotyledons</taxon>
        <taxon>Gunneridae</taxon>
        <taxon>Pentapetalae</taxon>
        <taxon>rosids</taxon>
        <taxon>malvids</taxon>
        <taxon>Brassicales</taxon>
        <taxon>Brassicaceae</taxon>
        <taxon>Lepidieae</taxon>
        <taxon>Lepidium</taxon>
    </lineage>
</organism>
<name>PSBD_LEPVR</name>
<sequence length="353" mass="39578">MTIALGKFTKDEKDLFDIMDDWLRRDRFVFVGWSGLLLFPCAYFALGGWFTGTTFVTSWYTHGLASSYLEGCNFLTAAVSTPANSLAHSLLLLWGPEAQGDFTRWCQLGGLWTFVALHGAFALIGFMLRQFELARSVQLRPYNAIAFSGPIAVFVSVFLIYPLGQSGWFFAPSFGVAAIFRFILFFQGFHNWTLNPFHMMGVAGVLGAALLCAIHGATVENTLFEDGDGANTFRAFNPTQAEETYSMVTANRFWSQIFGVAFSNKRWLHFFMLFVPVTGLWMSALGVVGLALNLRAYDFVSQEIRAAEDPEFETFYTKNILLNEGIRAWMAAQDQPHENLIFPEEVLPRGNAL</sequence>